<organism>
    <name type="scientific">Rickettsia bellii (strain RML369-C)</name>
    <dbReference type="NCBI Taxonomy" id="336407"/>
    <lineage>
        <taxon>Bacteria</taxon>
        <taxon>Pseudomonadati</taxon>
        <taxon>Pseudomonadota</taxon>
        <taxon>Alphaproteobacteria</taxon>
        <taxon>Rickettsiales</taxon>
        <taxon>Rickettsiaceae</taxon>
        <taxon>Rickettsieae</taxon>
        <taxon>Rickettsia</taxon>
        <taxon>belli group</taxon>
    </lineage>
</organism>
<comment type="function">
    <text evidence="1">Transfers the 4'-phosphopantetheine moiety from coenzyme A to a Ser of acyl-carrier-protein.</text>
</comment>
<comment type="catalytic activity">
    <reaction evidence="1">
        <text>apo-[ACP] + CoA = holo-[ACP] + adenosine 3',5'-bisphosphate + H(+)</text>
        <dbReference type="Rhea" id="RHEA:12068"/>
        <dbReference type="Rhea" id="RHEA-COMP:9685"/>
        <dbReference type="Rhea" id="RHEA-COMP:9690"/>
        <dbReference type="ChEBI" id="CHEBI:15378"/>
        <dbReference type="ChEBI" id="CHEBI:29999"/>
        <dbReference type="ChEBI" id="CHEBI:57287"/>
        <dbReference type="ChEBI" id="CHEBI:58343"/>
        <dbReference type="ChEBI" id="CHEBI:64479"/>
        <dbReference type="EC" id="2.7.8.7"/>
    </reaction>
</comment>
<comment type="cofactor">
    <cofactor evidence="1">
        <name>Mg(2+)</name>
        <dbReference type="ChEBI" id="CHEBI:18420"/>
    </cofactor>
</comment>
<comment type="subcellular location">
    <subcellularLocation>
        <location evidence="1">Cytoplasm</location>
    </subcellularLocation>
</comment>
<comment type="similarity">
    <text evidence="1">Belongs to the P-Pant transferase superfamily. AcpS family.</text>
</comment>
<evidence type="ECO:0000255" key="1">
    <source>
        <dbReference type="HAMAP-Rule" id="MF_00101"/>
    </source>
</evidence>
<name>ACPS_RICBR</name>
<reference key="1">
    <citation type="journal article" date="2006" name="PLoS Genet.">
        <title>Genome sequence of Rickettsia bellii illuminates the role of amoebae in gene exchanges between intracellular pathogens.</title>
        <authorList>
            <person name="Ogata H."/>
            <person name="La Scola B."/>
            <person name="Audic S."/>
            <person name="Renesto P."/>
            <person name="Blanc G."/>
            <person name="Robert C."/>
            <person name="Fournier P.-E."/>
            <person name="Claverie J.-M."/>
            <person name="Raoult D."/>
        </authorList>
    </citation>
    <scope>NUCLEOTIDE SEQUENCE [LARGE SCALE GENOMIC DNA]</scope>
    <source>
        <strain>RML369-C</strain>
    </source>
</reference>
<proteinExistence type="inferred from homology"/>
<dbReference type="EC" id="2.7.8.7" evidence="1"/>
<dbReference type="EMBL" id="CP000087">
    <property type="protein sequence ID" value="ABE05073.1"/>
    <property type="molecule type" value="Genomic_DNA"/>
</dbReference>
<dbReference type="RefSeq" id="WP_011477653.1">
    <property type="nucleotide sequence ID" value="NC_007940.1"/>
</dbReference>
<dbReference type="SMR" id="Q1RHU1"/>
<dbReference type="KEGG" id="rbe:RBE_0992"/>
<dbReference type="eggNOG" id="COG0736">
    <property type="taxonomic scope" value="Bacteria"/>
</dbReference>
<dbReference type="HOGENOM" id="CLU_089696_3_1_5"/>
<dbReference type="OrthoDB" id="517356at2"/>
<dbReference type="Proteomes" id="UP000001951">
    <property type="component" value="Chromosome"/>
</dbReference>
<dbReference type="GO" id="GO:0005737">
    <property type="term" value="C:cytoplasm"/>
    <property type="evidence" value="ECO:0007669"/>
    <property type="project" value="UniProtKB-SubCell"/>
</dbReference>
<dbReference type="GO" id="GO:0008897">
    <property type="term" value="F:holo-[acyl-carrier-protein] synthase activity"/>
    <property type="evidence" value="ECO:0007669"/>
    <property type="project" value="UniProtKB-UniRule"/>
</dbReference>
<dbReference type="GO" id="GO:0000287">
    <property type="term" value="F:magnesium ion binding"/>
    <property type="evidence" value="ECO:0007669"/>
    <property type="project" value="UniProtKB-UniRule"/>
</dbReference>
<dbReference type="GO" id="GO:0006633">
    <property type="term" value="P:fatty acid biosynthetic process"/>
    <property type="evidence" value="ECO:0007669"/>
    <property type="project" value="UniProtKB-UniRule"/>
</dbReference>
<dbReference type="Gene3D" id="3.90.470.20">
    <property type="entry name" value="4'-phosphopantetheinyl transferase domain"/>
    <property type="match status" value="1"/>
</dbReference>
<dbReference type="HAMAP" id="MF_00101">
    <property type="entry name" value="AcpS"/>
    <property type="match status" value="1"/>
</dbReference>
<dbReference type="InterPro" id="IPR008278">
    <property type="entry name" value="4-PPantetheinyl_Trfase_dom"/>
</dbReference>
<dbReference type="InterPro" id="IPR037143">
    <property type="entry name" value="4-PPantetheinyl_Trfase_dom_sf"/>
</dbReference>
<dbReference type="InterPro" id="IPR002582">
    <property type="entry name" value="ACPS"/>
</dbReference>
<dbReference type="InterPro" id="IPR004568">
    <property type="entry name" value="Ppantetheine-prot_Trfase_dom"/>
</dbReference>
<dbReference type="NCBIfam" id="TIGR00516">
    <property type="entry name" value="acpS"/>
    <property type="match status" value="1"/>
</dbReference>
<dbReference type="NCBIfam" id="TIGR00556">
    <property type="entry name" value="pantethn_trn"/>
    <property type="match status" value="1"/>
</dbReference>
<dbReference type="Pfam" id="PF01648">
    <property type="entry name" value="ACPS"/>
    <property type="match status" value="1"/>
</dbReference>
<dbReference type="SUPFAM" id="SSF56214">
    <property type="entry name" value="4'-phosphopantetheinyl transferase"/>
    <property type="match status" value="1"/>
</dbReference>
<protein>
    <recommendedName>
        <fullName evidence="1">Holo-[acyl-carrier-protein] synthase</fullName>
        <shortName evidence="1">Holo-ACP synthase</shortName>
        <ecNumber evidence="1">2.7.8.7</ecNumber>
    </recommendedName>
    <alternativeName>
        <fullName evidence="1">4'-phosphopantetheinyl transferase AcpS</fullName>
    </alternativeName>
</protein>
<sequence>MIIGVGTDIVQIPRIEKIIKLYPEIFPKRILNTEELKKFALLKKESHVTFLAKRFAAKEAISKAFGVGIGRGINFKDITLLNDELGKPIVKIDSLYTQKLPPFNIHLSLSDDYPICVAFVVVEKIIL</sequence>
<feature type="chain" id="PRO_0000277906" description="Holo-[acyl-carrier-protein] synthase">
    <location>
        <begin position="1"/>
        <end position="127"/>
    </location>
</feature>
<feature type="binding site" evidence="1">
    <location>
        <position position="8"/>
    </location>
    <ligand>
        <name>Mg(2+)</name>
        <dbReference type="ChEBI" id="CHEBI:18420"/>
    </ligand>
</feature>
<feature type="binding site" evidence="1">
    <location>
        <position position="59"/>
    </location>
    <ligand>
        <name>Mg(2+)</name>
        <dbReference type="ChEBI" id="CHEBI:18420"/>
    </ligand>
</feature>
<keyword id="KW-0963">Cytoplasm</keyword>
<keyword id="KW-0275">Fatty acid biosynthesis</keyword>
<keyword id="KW-0276">Fatty acid metabolism</keyword>
<keyword id="KW-0444">Lipid biosynthesis</keyword>
<keyword id="KW-0443">Lipid metabolism</keyword>
<keyword id="KW-0460">Magnesium</keyword>
<keyword id="KW-0479">Metal-binding</keyword>
<keyword id="KW-0808">Transferase</keyword>
<accession>Q1RHU1</accession>
<gene>
    <name evidence="1" type="primary">acpS</name>
    <name type="ordered locus">RBE_0992</name>
</gene>